<accession>B7JZT6</accession>
<proteinExistence type="inferred from homology"/>
<protein>
    <recommendedName>
        <fullName evidence="1">Shikimate kinase</fullName>
        <shortName evidence="1">SK</shortName>
        <ecNumber evidence="1">2.7.1.71</ecNumber>
    </recommendedName>
</protein>
<dbReference type="EC" id="2.7.1.71" evidence="1"/>
<dbReference type="EMBL" id="CP001287">
    <property type="protein sequence ID" value="ACK65029.1"/>
    <property type="molecule type" value="Genomic_DNA"/>
</dbReference>
<dbReference type="RefSeq" id="WP_012594304.1">
    <property type="nucleotide sequence ID" value="NC_011726.1"/>
</dbReference>
<dbReference type="SMR" id="B7JZT6"/>
<dbReference type="STRING" id="41431.PCC8801_0952"/>
<dbReference type="KEGG" id="cyp:PCC8801_0952"/>
<dbReference type="eggNOG" id="COG0703">
    <property type="taxonomic scope" value="Bacteria"/>
</dbReference>
<dbReference type="HOGENOM" id="CLU_057607_2_3_3"/>
<dbReference type="OrthoDB" id="9800332at2"/>
<dbReference type="UniPathway" id="UPA00053">
    <property type="reaction ID" value="UER00088"/>
</dbReference>
<dbReference type="Proteomes" id="UP000008204">
    <property type="component" value="Chromosome"/>
</dbReference>
<dbReference type="GO" id="GO:0005829">
    <property type="term" value="C:cytosol"/>
    <property type="evidence" value="ECO:0007669"/>
    <property type="project" value="TreeGrafter"/>
</dbReference>
<dbReference type="GO" id="GO:0005524">
    <property type="term" value="F:ATP binding"/>
    <property type="evidence" value="ECO:0007669"/>
    <property type="project" value="UniProtKB-UniRule"/>
</dbReference>
<dbReference type="GO" id="GO:0000287">
    <property type="term" value="F:magnesium ion binding"/>
    <property type="evidence" value="ECO:0007669"/>
    <property type="project" value="UniProtKB-UniRule"/>
</dbReference>
<dbReference type="GO" id="GO:0004765">
    <property type="term" value="F:shikimate kinase activity"/>
    <property type="evidence" value="ECO:0007669"/>
    <property type="project" value="UniProtKB-UniRule"/>
</dbReference>
<dbReference type="GO" id="GO:0008652">
    <property type="term" value="P:amino acid biosynthetic process"/>
    <property type="evidence" value="ECO:0007669"/>
    <property type="project" value="UniProtKB-KW"/>
</dbReference>
<dbReference type="GO" id="GO:0009073">
    <property type="term" value="P:aromatic amino acid family biosynthetic process"/>
    <property type="evidence" value="ECO:0007669"/>
    <property type="project" value="UniProtKB-KW"/>
</dbReference>
<dbReference type="GO" id="GO:0009423">
    <property type="term" value="P:chorismate biosynthetic process"/>
    <property type="evidence" value="ECO:0007669"/>
    <property type="project" value="UniProtKB-UniRule"/>
</dbReference>
<dbReference type="CDD" id="cd00464">
    <property type="entry name" value="SK"/>
    <property type="match status" value="1"/>
</dbReference>
<dbReference type="Gene3D" id="3.40.50.300">
    <property type="entry name" value="P-loop containing nucleotide triphosphate hydrolases"/>
    <property type="match status" value="1"/>
</dbReference>
<dbReference type="HAMAP" id="MF_00109">
    <property type="entry name" value="Shikimate_kinase"/>
    <property type="match status" value="1"/>
</dbReference>
<dbReference type="InterPro" id="IPR027417">
    <property type="entry name" value="P-loop_NTPase"/>
</dbReference>
<dbReference type="InterPro" id="IPR031322">
    <property type="entry name" value="Shikimate/glucono_kinase"/>
</dbReference>
<dbReference type="InterPro" id="IPR000623">
    <property type="entry name" value="Shikimate_kinase/TSH1"/>
</dbReference>
<dbReference type="InterPro" id="IPR023000">
    <property type="entry name" value="Shikimate_kinase_CS"/>
</dbReference>
<dbReference type="PANTHER" id="PTHR21087">
    <property type="entry name" value="SHIKIMATE KINASE"/>
    <property type="match status" value="1"/>
</dbReference>
<dbReference type="PANTHER" id="PTHR21087:SF16">
    <property type="entry name" value="SHIKIMATE KINASE 1, CHLOROPLASTIC"/>
    <property type="match status" value="1"/>
</dbReference>
<dbReference type="Pfam" id="PF01202">
    <property type="entry name" value="SKI"/>
    <property type="match status" value="1"/>
</dbReference>
<dbReference type="PRINTS" id="PR01100">
    <property type="entry name" value="SHIKIMTKNASE"/>
</dbReference>
<dbReference type="SUPFAM" id="SSF52540">
    <property type="entry name" value="P-loop containing nucleoside triphosphate hydrolases"/>
    <property type="match status" value="1"/>
</dbReference>
<dbReference type="PROSITE" id="PS01128">
    <property type="entry name" value="SHIKIMATE_KINASE"/>
    <property type="match status" value="1"/>
</dbReference>
<comment type="function">
    <text evidence="1">Catalyzes the specific phosphorylation of the 3-hydroxyl group of shikimic acid using ATP as a cosubstrate.</text>
</comment>
<comment type="catalytic activity">
    <reaction evidence="1">
        <text>shikimate + ATP = 3-phosphoshikimate + ADP + H(+)</text>
        <dbReference type="Rhea" id="RHEA:13121"/>
        <dbReference type="ChEBI" id="CHEBI:15378"/>
        <dbReference type="ChEBI" id="CHEBI:30616"/>
        <dbReference type="ChEBI" id="CHEBI:36208"/>
        <dbReference type="ChEBI" id="CHEBI:145989"/>
        <dbReference type="ChEBI" id="CHEBI:456216"/>
        <dbReference type="EC" id="2.7.1.71"/>
    </reaction>
</comment>
<comment type="cofactor">
    <cofactor evidence="1">
        <name>Mg(2+)</name>
        <dbReference type="ChEBI" id="CHEBI:18420"/>
    </cofactor>
    <text evidence="1">Binds 1 Mg(2+) ion per subunit.</text>
</comment>
<comment type="pathway">
    <text evidence="1">Metabolic intermediate biosynthesis; chorismate biosynthesis; chorismate from D-erythrose 4-phosphate and phosphoenolpyruvate: step 5/7.</text>
</comment>
<comment type="subunit">
    <text evidence="1">Monomer.</text>
</comment>
<comment type="subcellular location">
    <subcellularLocation>
        <location evidence="1">Cytoplasm</location>
    </subcellularLocation>
</comment>
<comment type="similarity">
    <text evidence="1">Belongs to the shikimate kinase family.</text>
</comment>
<reference key="1">
    <citation type="journal article" date="2011" name="MBio">
        <title>Novel metabolic attributes of the genus Cyanothece, comprising a group of unicellular nitrogen-fixing Cyanobacteria.</title>
        <authorList>
            <person name="Bandyopadhyay A."/>
            <person name="Elvitigala T."/>
            <person name="Welsh E."/>
            <person name="Stockel J."/>
            <person name="Liberton M."/>
            <person name="Min H."/>
            <person name="Sherman L.A."/>
            <person name="Pakrasi H.B."/>
        </authorList>
    </citation>
    <scope>NUCLEOTIDE SEQUENCE [LARGE SCALE GENOMIC DNA]</scope>
    <source>
        <strain>PCC 8801 / RF-1</strain>
    </source>
</reference>
<keyword id="KW-0028">Amino-acid biosynthesis</keyword>
<keyword id="KW-0057">Aromatic amino acid biosynthesis</keyword>
<keyword id="KW-0067">ATP-binding</keyword>
<keyword id="KW-0963">Cytoplasm</keyword>
<keyword id="KW-0418">Kinase</keyword>
<keyword id="KW-0460">Magnesium</keyword>
<keyword id="KW-0479">Metal-binding</keyword>
<keyword id="KW-0547">Nucleotide-binding</keyword>
<keyword id="KW-1185">Reference proteome</keyword>
<keyword id="KW-0808">Transferase</keyword>
<organism>
    <name type="scientific">Rippkaea orientalis (strain PCC 8801 / RF-1)</name>
    <name type="common">Cyanothece sp. (strain PCC 8801)</name>
    <dbReference type="NCBI Taxonomy" id="41431"/>
    <lineage>
        <taxon>Bacteria</taxon>
        <taxon>Bacillati</taxon>
        <taxon>Cyanobacteriota</taxon>
        <taxon>Cyanophyceae</taxon>
        <taxon>Oscillatoriophycideae</taxon>
        <taxon>Chroococcales</taxon>
        <taxon>Aphanothecaceae</taxon>
        <taxon>Rippkaea</taxon>
        <taxon>Rippkaea orientalis</taxon>
    </lineage>
</organism>
<evidence type="ECO:0000255" key="1">
    <source>
        <dbReference type="HAMAP-Rule" id="MF_00109"/>
    </source>
</evidence>
<feature type="chain" id="PRO_1000117458" description="Shikimate kinase">
    <location>
        <begin position="1"/>
        <end position="187"/>
    </location>
</feature>
<feature type="binding site" evidence="1">
    <location>
        <begin position="19"/>
        <end position="24"/>
    </location>
    <ligand>
        <name>ATP</name>
        <dbReference type="ChEBI" id="CHEBI:30616"/>
    </ligand>
</feature>
<feature type="binding site" evidence="1">
    <location>
        <position position="23"/>
    </location>
    <ligand>
        <name>Mg(2+)</name>
        <dbReference type="ChEBI" id="CHEBI:18420"/>
    </ligand>
</feature>
<feature type="binding site" evidence="1">
    <location>
        <position position="41"/>
    </location>
    <ligand>
        <name>substrate</name>
    </ligand>
</feature>
<feature type="binding site" evidence="1">
    <location>
        <position position="65"/>
    </location>
    <ligand>
        <name>substrate</name>
    </ligand>
</feature>
<feature type="binding site" evidence="1">
    <location>
        <position position="87"/>
    </location>
    <ligand>
        <name>substrate</name>
    </ligand>
</feature>
<feature type="binding site" evidence="1">
    <location>
        <position position="124"/>
    </location>
    <ligand>
        <name>ATP</name>
        <dbReference type="ChEBI" id="CHEBI:30616"/>
    </ligand>
</feature>
<feature type="binding site" evidence="1">
    <location>
        <position position="143"/>
    </location>
    <ligand>
        <name>substrate</name>
    </ligand>
</feature>
<feature type="binding site" evidence="1">
    <location>
        <position position="160"/>
    </location>
    <ligand>
        <name>ATP</name>
        <dbReference type="ChEBI" id="CHEBI:30616"/>
    </ligand>
</feature>
<sequence length="187" mass="21172">MKTQKLLQGINIYLIGMMGSGKSTIGKILAQRLDYRFFDTDILIERVTQQSINDIFVTQGETVFRDIETQVLSEVAACTRSVIATGGGIVLNSQNWSYLHHGLIIWLDVSIKLLKTRLINDTTRPLLKESDLTLKLKTLDEQRRNLYNKADLTIVINQNRTPESIVSEILEAIPTVIKPKVEANQFN</sequence>
<gene>
    <name evidence="1" type="primary">aroK</name>
    <name type="ordered locus">PCC8801_0952</name>
</gene>
<name>AROK_RIPO1</name>